<comment type="catalytic activity">
    <reaction>
        <text>(2R)-3-phosphoglycerate + ATP = (2R)-3-phospho-glyceroyl phosphate + ADP</text>
        <dbReference type="Rhea" id="RHEA:14801"/>
        <dbReference type="ChEBI" id="CHEBI:30616"/>
        <dbReference type="ChEBI" id="CHEBI:57604"/>
        <dbReference type="ChEBI" id="CHEBI:58272"/>
        <dbReference type="ChEBI" id="CHEBI:456216"/>
        <dbReference type="EC" id="2.7.2.3"/>
    </reaction>
</comment>
<comment type="pathway">
    <text>Carbohydrate degradation; glycolysis; pyruvate from D-glyceraldehyde 3-phosphate: step 2/5.</text>
</comment>
<comment type="subunit">
    <text evidence="1">Homodimer.</text>
</comment>
<comment type="subcellular location">
    <subcellularLocation>
        <location>Cytoplasm</location>
    </subcellularLocation>
</comment>
<comment type="similarity">
    <text evidence="3">Belongs to the phosphoglycerate kinase family.</text>
</comment>
<evidence type="ECO:0000250" key="1"/>
<evidence type="ECO:0000269" key="2">
    <source ref="2"/>
</evidence>
<evidence type="ECO:0000305" key="3"/>
<evidence type="ECO:0007829" key="4">
    <source>
        <dbReference type="PDB" id="2CUN"/>
    </source>
</evidence>
<organism>
    <name type="scientific">Pyrococcus horikoshii (strain ATCC 700860 / DSM 12428 / JCM 9974 / NBRC 100139 / OT-3)</name>
    <dbReference type="NCBI Taxonomy" id="70601"/>
    <lineage>
        <taxon>Archaea</taxon>
        <taxon>Methanobacteriati</taxon>
        <taxon>Methanobacteriota</taxon>
        <taxon>Thermococci</taxon>
        <taxon>Thermococcales</taxon>
        <taxon>Thermococcaceae</taxon>
        <taxon>Pyrococcus</taxon>
    </lineage>
</organism>
<keyword id="KW-0002">3D-structure</keyword>
<keyword id="KW-0067">ATP-binding</keyword>
<keyword id="KW-0963">Cytoplasm</keyword>
<keyword id="KW-0324">Glycolysis</keyword>
<keyword id="KW-0418">Kinase</keyword>
<keyword id="KW-0547">Nucleotide-binding</keyword>
<keyword id="KW-0808">Transferase</keyword>
<accession>O58965</accession>
<feature type="chain" id="PRO_0000146067" description="Phosphoglycerate kinase">
    <location>
        <begin position="1"/>
        <end position="410"/>
    </location>
</feature>
<feature type="binding site" evidence="1">
    <location>
        <begin position="19"/>
        <end position="21"/>
    </location>
    <ligand>
        <name>substrate</name>
    </ligand>
</feature>
<feature type="binding site" evidence="2">
    <location>
        <position position="34"/>
    </location>
    <ligand>
        <name>substrate</name>
    </ligand>
</feature>
<feature type="binding site" evidence="1">
    <location>
        <begin position="57"/>
        <end position="60"/>
    </location>
    <ligand>
        <name>substrate</name>
    </ligand>
</feature>
<feature type="binding site" evidence="1">
    <location>
        <position position="114"/>
    </location>
    <ligand>
        <name>substrate</name>
    </ligand>
</feature>
<feature type="binding site" evidence="1">
    <location>
        <position position="154"/>
    </location>
    <ligand>
        <name>substrate</name>
    </ligand>
</feature>
<feature type="binding site" evidence="1">
    <location>
        <position position="332"/>
    </location>
    <ligand>
        <name>ATP</name>
        <dbReference type="ChEBI" id="CHEBI:30616"/>
    </ligand>
</feature>
<feature type="binding site" evidence="1">
    <location>
        <begin position="358"/>
        <end position="361"/>
    </location>
    <ligand>
        <name>ATP</name>
        <dbReference type="ChEBI" id="CHEBI:30616"/>
    </ligand>
</feature>
<feature type="helix" evidence="4">
    <location>
        <begin position="4"/>
        <end position="6"/>
    </location>
</feature>
<feature type="strand" evidence="4">
    <location>
        <begin position="13"/>
        <end position="17"/>
    </location>
</feature>
<feature type="helix" evidence="4">
    <location>
        <begin position="33"/>
        <end position="37"/>
    </location>
</feature>
<feature type="helix" evidence="4">
    <location>
        <begin position="39"/>
        <end position="47"/>
    </location>
</feature>
<feature type="strand" evidence="4">
    <location>
        <begin position="51"/>
        <end position="55"/>
    </location>
</feature>
<feature type="helix" evidence="4">
    <location>
        <begin position="70"/>
        <end position="80"/>
    </location>
</feature>
<feature type="strand" evidence="4">
    <location>
        <begin position="84"/>
        <end position="86"/>
    </location>
</feature>
<feature type="strand" evidence="4">
    <location>
        <begin position="90"/>
        <end position="92"/>
    </location>
</feature>
<feature type="helix" evidence="4">
    <location>
        <begin position="93"/>
        <end position="100"/>
    </location>
</feature>
<feature type="strand" evidence="4">
    <location>
        <begin position="107"/>
        <end position="109"/>
    </location>
</feature>
<feature type="helix" evidence="4">
    <location>
        <begin position="113"/>
        <end position="115"/>
    </location>
</feature>
<feature type="turn" evidence="4">
    <location>
        <begin position="117"/>
        <end position="120"/>
    </location>
</feature>
<feature type="helix" evidence="4">
    <location>
        <begin position="125"/>
        <end position="128"/>
    </location>
</feature>
<feature type="helix" evidence="4">
    <location>
        <begin position="132"/>
        <end position="138"/>
    </location>
</feature>
<feature type="strand" evidence="4">
    <location>
        <begin position="142"/>
        <end position="146"/>
    </location>
</feature>
<feature type="helix" evidence="4">
    <location>
        <begin position="149"/>
        <end position="151"/>
    </location>
</feature>
<feature type="helix" evidence="4">
    <location>
        <begin position="157"/>
        <end position="160"/>
    </location>
</feature>
<feature type="turn" evidence="4">
    <location>
        <begin position="161"/>
        <end position="165"/>
    </location>
</feature>
<feature type="strand" evidence="4">
    <location>
        <begin position="168"/>
        <end position="170"/>
    </location>
</feature>
<feature type="helix" evidence="4">
    <location>
        <begin position="172"/>
        <end position="185"/>
    </location>
</feature>
<feature type="strand" evidence="4">
    <location>
        <begin position="192"/>
        <end position="196"/>
    </location>
</feature>
<feature type="helix" evidence="4">
    <location>
        <begin position="201"/>
        <end position="213"/>
    </location>
</feature>
<feature type="strand" evidence="4">
    <location>
        <begin position="218"/>
        <end position="222"/>
    </location>
</feature>
<feature type="helix" evidence="4">
    <location>
        <begin position="224"/>
        <end position="234"/>
    </location>
</feature>
<feature type="helix" evidence="4">
    <location>
        <begin position="240"/>
        <end position="247"/>
    </location>
</feature>
<feature type="turn" evidence="4">
    <location>
        <begin position="248"/>
        <end position="250"/>
    </location>
</feature>
<feature type="helix" evidence="4">
    <location>
        <begin position="251"/>
        <end position="254"/>
    </location>
</feature>
<feature type="helix" evidence="4">
    <location>
        <begin position="255"/>
        <end position="265"/>
    </location>
</feature>
<feature type="helix" evidence="4">
    <location>
        <begin position="266"/>
        <end position="268"/>
    </location>
</feature>
<feature type="strand" evidence="4">
    <location>
        <begin position="273"/>
        <end position="279"/>
    </location>
</feature>
<feature type="strand" evidence="4">
    <location>
        <begin position="282"/>
        <end position="290"/>
    </location>
</feature>
<feature type="helix" evidence="4">
    <location>
        <begin position="291"/>
        <end position="297"/>
    </location>
</feature>
<feature type="strand" evidence="4">
    <location>
        <begin position="301"/>
        <end position="304"/>
    </location>
</feature>
<feature type="helix" evidence="4">
    <location>
        <begin position="306"/>
        <end position="317"/>
    </location>
</feature>
<feature type="strand" evidence="4">
    <location>
        <begin position="320"/>
        <end position="326"/>
    </location>
</feature>
<feature type="helix" evidence="4">
    <location>
        <begin position="334"/>
        <end position="336"/>
    </location>
</feature>
<feature type="helix" evidence="4">
    <location>
        <begin position="338"/>
        <end position="349"/>
    </location>
</feature>
<feature type="strand" evidence="4">
    <location>
        <begin position="350"/>
        <end position="357"/>
    </location>
</feature>
<feature type="helix" evidence="4">
    <location>
        <begin position="359"/>
        <end position="367"/>
    </location>
</feature>
<feature type="strand" evidence="4">
    <location>
        <begin position="374"/>
        <end position="376"/>
    </location>
</feature>
<feature type="helix" evidence="4">
    <location>
        <begin position="381"/>
        <end position="387"/>
    </location>
</feature>
<feature type="helix" evidence="4">
    <location>
        <begin position="393"/>
        <end position="404"/>
    </location>
</feature>
<gene>
    <name type="primary">pgk</name>
    <name type="ordered locus">PH1218</name>
    <name type="ORF">PHBK036</name>
</gene>
<proteinExistence type="evidence at protein level"/>
<dbReference type="EC" id="2.7.2.3"/>
<dbReference type="EMBL" id="BA000001">
    <property type="protein sequence ID" value="BAA30318.1"/>
    <property type="molecule type" value="Genomic_DNA"/>
</dbReference>
<dbReference type="PIR" id="D71065">
    <property type="entry name" value="D71065"/>
</dbReference>
<dbReference type="RefSeq" id="WP_010885305.1">
    <property type="nucleotide sequence ID" value="NC_000961.1"/>
</dbReference>
<dbReference type="PDB" id="2CUN">
    <property type="method" value="X-ray"/>
    <property type="resolution" value="2.10 A"/>
    <property type="chains" value="A/B=1-410"/>
</dbReference>
<dbReference type="PDBsum" id="2CUN"/>
<dbReference type="SMR" id="O58965"/>
<dbReference type="IntAct" id="O58965">
    <property type="interactions" value="1"/>
</dbReference>
<dbReference type="MINT" id="O58965"/>
<dbReference type="STRING" id="70601.gene:9378180"/>
<dbReference type="EnsemblBacteria" id="BAA30318">
    <property type="protein sequence ID" value="BAA30318"/>
    <property type="gene ID" value="BAA30318"/>
</dbReference>
<dbReference type="GeneID" id="1443540"/>
<dbReference type="KEGG" id="pho:PH1218"/>
<dbReference type="eggNOG" id="arCOG00496">
    <property type="taxonomic scope" value="Archaea"/>
</dbReference>
<dbReference type="OrthoDB" id="6575at2157"/>
<dbReference type="UniPathway" id="UPA00109">
    <property type="reaction ID" value="UER00185"/>
</dbReference>
<dbReference type="EvolutionaryTrace" id="O58965"/>
<dbReference type="Proteomes" id="UP000000752">
    <property type="component" value="Chromosome"/>
</dbReference>
<dbReference type="GO" id="GO:0005829">
    <property type="term" value="C:cytosol"/>
    <property type="evidence" value="ECO:0007669"/>
    <property type="project" value="TreeGrafter"/>
</dbReference>
<dbReference type="GO" id="GO:0043531">
    <property type="term" value="F:ADP binding"/>
    <property type="evidence" value="ECO:0007669"/>
    <property type="project" value="TreeGrafter"/>
</dbReference>
<dbReference type="GO" id="GO:0005524">
    <property type="term" value="F:ATP binding"/>
    <property type="evidence" value="ECO:0007669"/>
    <property type="project" value="UniProtKB-KW"/>
</dbReference>
<dbReference type="GO" id="GO:0004618">
    <property type="term" value="F:phosphoglycerate kinase activity"/>
    <property type="evidence" value="ECO:0007669"/>
    <property type="project" value="UniProtKB-UniRule"/>
</dbReference>
<dbReference type="GO" id="GO:0006094">
    <property type="term" value="P:gluconeogenesis"/>
    <property type="evidence" value="ECO:0007669"/>
    <property type="project" value="TreeGrafter"/>
</dbReference>
<dbReference type="GO" id="GO:0006096">
    <property type="term" value="P:glycolytic process"/>
    <property type="evidence" value="ECO:0007669"/>
    <property type="project" value="UniProtKB-UniRule"/>
</dbReference>
<dbReference type="FunFam" id="3.40.50.1260:FF:000006">
    <property type="entry name" value="Phosphoglycerate kinase"/>
    <property type="match status" value="1"/>
</dbReference>
<dbReference type="FunFam" id="3.40.50.1260:FF:000012">
    <property type="entry name" value="Phosphoglycerate kinase"/>
    <property type="match status" value="1"/>
</dbReference>
<dbReference type="Gene3D" id="3.40.50.1260">
    <property type="entry name" value="Phosphoglycerate kinase, N-terminal domain"/>
    <property type="match status" value="2"/>
</dbReference>
<dbReference type="HAMAP" id="MF_00145">
    <property type="entry name" value="Phosphoglyc_kinase"/>
    <property type="match status" value="1"/>
</dbReference>
<dbReference type="InterPro" id="IPR001576">
    <property type="entry name" value="Phosphoglycerate_kinase"/>
</dbReference>
<dbReference type="InterPro" id="IPR015911">
    <property type="entry name" value="Phosphoglycerate_kinase_CS"/>
</dbReference>
<dbReference type="InterPro" id="IPR015824">
    <property type="entry name" value="Phosphoglycerate_kinase_N"/>
</dbReference>
<dbReference type="InterPro" id="IPR036043">
    <property type="entry name" value="Phosphoglycerate_kinase_sf"/>
</dbReference>
<dbReference type="PANTHER" id="PTHR11406">
    <property type="entry name" value="PHOSPHOGLYCERATE KINASE"/>
    <property type="match status" value="1"/>
</dbReference>
<dbReference type="PANTHER" id="PTHR11406:SF23">
    <property type="entry name" value="PHOSPHOGLYCERATE KINASE 1, CHLOROPLASTIC-RELATED"/>
    <property type="match status" value="1"/>
</dbReference>
<dbReference type="Pfam" id="PF00162">
    <property type="entry name" value="PGK"/>
    <property type="match status" value="1"/>
</dbReference>
<dbReference type="PIRSF" id="PIRSF000724">
    <property type="entry name" value="Pgk"/>
    <property type="match status" value="1"/>
</dbReference>
<dbReference type="PRINTS" id="PR00477">
    <property type="entry name" value="PHGLYCKINASE"/>
</dbReference>
<dbReference type="SUPFAM" id="SSF53748">
    <property type="entry name" value="Phosphoglycerate kinase"/>
    <property type="match status" value="1"/>
</dbReference>
<dbReference type="PROSITE" id="PS00111">
    <property type="entry name" value="PGLYCERATE_KINASE"/>
    <property type="match status" value="1"/>
</dbReference>
<sequence>MFRLEDFNFHNKTVFLRVDLNSPMKDGKIISDARFKAVLPTIRYLIESGAKVVIGTHQGKPYSEDYTTTEEHARVLSELLDQHVEYIEDIFGRYAREKIKELKSGEVAILENLRFSAEEVKNKPIEECEKTFLVKKLSKVIDYVVNDAFATAHRSQPSLVGFARIKPMIMGFLMEKEIEALMRAYYSKDSPKIYVLGGAKVEDSLKVVENVLRRERADLVLTGGLVANVFTLAKGFDLGRKNVEFMKKKGLLDYVKHAEEILDEFYPYIRTPVDFAVDYKGERVEIDLLSENRGLLHQYQIMDIGKRTAEKYREILMKARIIVANGPMGVFEREEFAIGTVEVFKAIADSPAFSVLGGGHSIASIQKYGITGITHISTGGGAMLSFFAGEELPVLRALQISYEKFKEVVK</sequence>
<protein>
    <recommendedName>
        <fullName>Phosphoglycerate kinase</fullName>
        <ecNumber>2.7.2.3</ecNumber>
    </recommendedName>
</protein>
<name>PGK_PYRHO</name>
<reference key="1">
    <citation type="journal article" date="1998" name="DNA Res.">
        <title>Complete sequence and gene organization of the genome of a hyper-thermophilic archaebacterium, Pyrococcus horikoshii OT3.</title>
        <authorList>
            <person name="Kawarabayasi Y."/>
            <person name="Sawada M."/>
            <person name="Horikawa H."/>
            <person name="Haikawa Y."/>
            <person name="Hino Y."/>
            <person name="Yamamoto S."/>
            <person name="Sekine M."/>
            <person name="Baba S."/>
            <person name="Kosugi H."/>
            <person name="Hosoyama A."/>
            <person name="Nagai Y."/>
            <person name="Sakai M."/>
            <person name="Ogura K."/>
            <person name="Otsuka R."/>
            <person name="Nakazawa H."/>
            <person name="Takamiya M."/>
            <person name="Ohfuku Y."/>
            <person name="Funahashi T."/>
            <person name="Tanaka T."/>
            <person name="Kudoh Y."/>
            <person name="Yamazaki J."/>
            <person name="Kushida N."/>
            <person name="Oguchi A."/>
            <person name="Aoki K."/>
            <person name="Yoshizawa T."/>
            <person name="Nakamura Y."/>
            <person name="Robb F.T."/>
            <person name="Horikoshi K."/>
            <person name="Masuchi Y."/>
            <person name="Shizuya H."/>
            <person name="Kikuchi H."/>
        </authorList>
    </citation>
    <scope>NUCLEOTIDE SEQUENCE [LARGE SCALE GENOMIC DNA]</scope>
    <source>
        <strain>ATCC 700860 / DSM 12428 / JCM 9974 / NBRC 100139 / OT-3</strain>
    </source>
</reference>
<reference key="2">
    <citation type="submission" date="2005-06" db="PDB data bank">
        <title>Crystal structure of phosphoglycerate kinase from Pyrococcus horikoshii OT3.</title>
        <authorList>
            <consortium name="RIKEN structural genomics initiative (RSGI)"/>
        </authorList>
    </citation>
    <scope>X-RAY CRYSTALLOGRAPHY (2.1 ANGSTROMS) IN COMPLEX WITH SUBSTRATE</scope>
</reference>